<protein>
    <recommendedName>
        <fullName evidence="1">Valine--tRNA ligase</fullName>
        <ecNumber evidence="1">6.1.1.9</ecNumber>
    </recommendedName>
    <alternativeName>
        <fullName evidence="1">Valyl-tRNA synthetase</fullName>
        <shortName evidence="1">ValRS</shortName>
    </alternativeName>
</protein>
<proteinExistence type="inferred from homology"/>
<reference key="1">
    <citation type="journal article" date="2001" name="Science">
        <title>Comparative genomics of Listeria species.</title>
        <authorList>
            <person name="Glaser P."/>
            <person name="Frangeul L."/>
            <person name="Buchrieser C."/>
            <person name="Rusniok C."/>
            <person name="Amend A."/>
            <person name="Baquero F."/>
            <person name="Berche P."/>
            <person name="Bloecker H."/>
            <person name="Brandt P."/>
            <person name="Chakraborty T."/>
            <person name="Charbit A."/>
            <person name="Chetouani F."/>
            <person name="Couve E."/>
            <person name="de Daruvar A."/>
            <person name="Dehoux P."/>
            <person name="Domann E."/>
            <person name="Dominguez-Bernal G."/>
            <person name="Duchaud E."/>
            <person name="Durant L."/>
            <person name="Dussurget O."/>
            <person name="Entian K.-D."/>
            <person name="Fsihi H."/>
            <person name="Garcia-del Portillo F."/>
            <person name="Garrido P."/>
            <person name="Gautier L."/>
            <person name="Goebel W."/>
            <person name="Gomez-Lopez N."/>
            <person name="Hain T."/>
            <person name="Hauf J."/>
            <person name="Jackson D."/>
            <person name="Jones L.-M."/>
            <person name="Kaerst U."/>
            <person name="Kreft J."/>
            <person name="Kuhn M."/>
            <person name="Kunst F."/>
            <person name="Kurapkat G."/>
            <person name="Madueno E."/>
            <person name="Maitournam A."/>
            <person name="Mata Vicente J."/>
            <person name="Ng E."/>
            <person name="Nedjari H."/>
            <person name="Nordsiek G."/>
            <person name="Novella S."/>
            <person name="de Pablos B."/>
            <person name="Perez-Diaz J.-C."/>
            <person name="Purcell R."/>
            <person name="Remmel B."/>
            <person name="Rose M."/>
            <person name="Schlueter T."/>
            <person name="Simoes N."/>
            <person name="Tierrez A."/>
            <person name="Vazquez-Boland J.-A."/>
            <person name="Voss H."/>
            <person name="Wehland J."/>
            <person name="Cossart P."/>
        </authorList>
    </citation>
    <scope>NUCLEOTIDE SEQUENCE [LARGE SCALE GENOMIC DNA]</scope>
    <source>
        <strain>ATCC BAA-679 / EGD-e</strain>
    </source>
</reference>
<name>SYV_LISMO</name>
<accession>Q8Y6X9</accession>
<dbReference type="EC" id="6.1.1.9" evidence="1"/>
<dbReference type="EMBL" id="AL591979">
    <property type="protein sequence ID" value="CAC99630.1"/>
    <property type="molecule type" value="Genomic_DNA"/>
</dbReference>
<dbReference type="PIR" id="AH1268">
    <property type="entry name" value="AH1268"/>
</dbReference>
<dbReference type="RefSeq" id="NP_465077.1">
    <property type="nucleotide sequence ID" value="NC_003210.1"/>
</dbReference>
<dbReference type="RefSeq" id="WP_010989740.1">
    <property type="nucleotide sequence ID" value="NZ_CP149495.1"/>
</dbReference>
<dbReference type="SMR" id="Q8Y6X9"/>
<dbReference type="STRING" id="169963.gene:17594209"/>
<dbReference type="PaxDb" id="169963-lmo1552"/>
<dbReference type="EnsemblBacteria" id="CAC99630">
    <property type="protein sequence ID" value="CAC99630"/>
    <property type="gene ID" value="CAC99630"/>
</dbReference>
<dbReference type="GeneID" id="986904"/>
<dbReference type="KEGG" id="lmo:lmo1552"/>
<dbReference type="PATRIC" id="fig|169963.11.peg.1593"/>
<dbReference type="eggNOG" id="COG0525">
    <property type="taxonomic scope" value="Bacteria"/>
</dbReference>
<dbReference type="HOGENOM" id="CLU_001493_0_2_9"/>
<dbReference type="OrthoDB" id="9810365at2"/>
<dbReference type="PhylomeDB" id="Q8Y6X9"/>
<dbReference type="BioCyc" id="LMON169963:LMO1552-MONOMER"/>
<dbReference type="Proteomes" id="UP000000817">
    <property type="component" value="Chromosome"/>
</dbReference>
<dbReference type="GO" id="GO:0005829">
    <property type="term" value="C:cytosol"/>
    <property type="evidence" value="ECO:0000318"/>
    <property type="project" value="GO_Central"/>
</dbReference>
<dbReference type="GO" id="GO:0002161">
    <property type="term" value="F:aminoacyl-tRNA deacylase activity"/>
    <property type="evidence" value="ECO:0007669"/>
    <property type="project" value="InterPro"/>
</dbReference>
<dbReference type="GO" id="GO:0005524">
    <property type="term" value="F:ATP binding"/>
    <property type="evidence" value="ECO:0007669"/>
    <property type="project" value="UniProtKB-UniRule"/>
</dbReference>
<dbReference type="GO" id="GO:0004832">
    <property type="term" value="F:valine-tRNA ligase activity"/>
    <property type="evidence" value="ECO:0000318"/>
    <property type="project" value="GO_Central"/>
</dbReference>
<dbReference type="GO" id="GO:0006438">
    <property type="term" value="P:valyl-tRNA aminoacylation"/>
    <property type="evidence" value="ECO:0000318"/>
    <property type="project" value="GO_Central"/>
</dbReference>
<dbReference type="CDD" id="cd07962">
    <property type="entry name" value="Anticodon_Ia_Val"/>
    <property type="match status" value="1"/>
</dbReference>
<dbReference type="CDD" id="cd00817">
    <property type="entry name" value="ValRS_core"/>
    <property type="match status" value="1"/>
</dbReference>
<dbReference type="FunFam" id="1.10.287.380:FF:000001">
    <property type="entry name" value="Valine--tRNA ligase"/>
    <property type="match status" value="1"/>
</dbReference>
<dbReference type="FunFam" id="1.10.730.10:FF:000014">
    <property type="entry name" value="Valine--tRNA ligase"/>
    <property type="match status" value="1"/>
</dbReference>
<dbReference type="FunFam" id="3.40.50.620:FF:000032">
    <property type="entry name" value="Valine--tRNA ligase"/>
    <property type="match status" value="1"/>
</dbReference>
<dbReference type="FunFam" id="3.40.50.620:FF:000098">
    <property type="entry name" value="Valine--tRNA ligase"/>
    <property type="match status" value="1"/>
</dbReference>
<dbReference type="FunFam" id="3.90.740.10:FF:000005">
    <property type="entry name" value="Valine--tRNA ligase, mitochondrial"/>
    <property type="match status" value="1"/>
</dbReference>
<dbReference type="Gene3D" id="3.40.50.620">
    <property type="entry name" value="HUPs"/>
    <property type="match status" value="2"/>
</dbReference>
<dbReference type="Gene3D" id="1.10.730.10">
    <property type="entry name" value="Isoleucyl-tRNA Synthetase, Domain 1"/>
    <property type="match status" value="1"/>
</dbReference>
<dbReference type="Gene3D" id="1.10.287.380">
    <property type="entry name" value="Valyl-tRNA synthetase, C-terminal domain"/>
    <property type="match status" value="1"/>
</dbReference>
<dbReference type="Gene3D" id="3.90.740.10">
    <property type="entry name" value="Valyl/Leucyl/Isoleucyl-tRNA synthetase, editing domain"/>
    <property type="match status" value="1"/>
</dbReference>
<dbReference type="HAMAP" id="MF_02004">
    <property type="entry name" value="Val_tRNA_synth_type1"/>
    <property type="match status" value="1"/>
</dbReference>
<dbReference type="InterPro" id="IPR001412">
    <property type="entry name" value="aa-tRNA-synth_I_CS"/>
</dbReference>
<dbReference type="InterPro" id="IPR002300">
    <property type="entry name" value="aa-tRNA-synth_Ia"/>
</dbReference>
<dbReference type="InterPro" id="IPR033705">
    <property type="entry name" value="Anticodon_Ia_Val"/>
</dbReference>
<dbReference type="InterPro" id="IPR013155">
    <property type="entry name" value="M/V/L/I-tRNA-synth_anticd-bd"/>
</dbReference>
<dbReference type="InterPro" id="IPR014729">
    <property type="entry name" value="Rossmann-like_a/b/a_fold"/>
</dbReference>
<dbReference type="InterPro" id="IPR010978">
    <property type="entry name" value="tRNA-bd_arm"/>
</dbReference>
<dbReference type="InterPro" id="IPR009080">
    <property type="entry name" value="tRNAsynth_Ia_anticodon-bd"/>
</dbReference>
<dbReference type="InterPro" id="IPR037118">
    <property type="entry name" value="Val-tRNA_synth_C_sf"/>
</dbReference>
<dbReference type="InterPro" id="IPR019499">
    <property type="entry name" value="Val-tRNA_synth_tRNA-bd"/>
</dbReference>
<dbReference type="InterPro" id="IPR009008">
    <property type="entry name" value="Val/Leu/Ile-tRNA-synth_edit"/>
</dbReference>
<dbReference type="InterPro" id="IPR002303">
    <property type="entry name" value="Valyl-tRNA_ligase"/>
</dbReference>
<dbReference type="NCBIfam" id="NF004349">
    <property type="entry name" value="PRK05729.1"/>
    <property type="match status" value="1"/>
</dbReference>
<dbReference type="NCBIfam" id="TIGR00422">
    <property type="entry name" value="valS"/>
    <property type="match status" value="1"/>
</dbReference>
<dbReference type="PANTHER" id="PTHR11946:SF93">
    <property type="entry name" value="VALINE--TRNA LIGASE, CHLOROPLASTIC_MITOCHONDRIAL 2"/>
    <property type="match status" value="1"/>
</dbReference>
<dbReference type="PANTHER" id="PTHR11946">
    <property type="entry name" value="VALYL-TRNA SYNTHETASES"/>
    <property type="match status" value="1"/>
</dbReference>
<dbReference type="Pfam" id="PF08264">
    <property type="entry name" value="Anticodon_1"/>
    <property type="match status" value="1"/>
</dbReference>
<dbReference type="Pfam" id="PF00133">
    <property type="entry name" value="tRNA-synt_1"/>
    <property type="match status" value="1"/>
</dbReference>
<dbReference type="Pfam" id="PF10458">
    <property type="entry name" value="Val_tRNA-synt_C"/>
    <property type="match status" value="1"/>
</dbReference>
<dbReference type="PRINTS" id="PR00986">
    <property type="entry name" value="TRNASYNTHVAL"/>
</dbReference>
<dbReference type="SUPFAM" id="SSF47323">
    <property type="entry name" value="Anticodon-binding domain of a subclass of class I aminoacyl-tRNA synthetases"/>
    <property type="match status" value="1"/>
</dbReference>
<dbReference type="SUPFAM" id="SSF52374">
    <property type="entry name" value="Nucleotidylyl transferase"/>
    <property type="match status" value="1"/>
</dbReference>
<dbReference type="SUPFAM" id="SSF46589">
    <property type="entry name" value="tRNA-binding arm"/>
    <property type="match status" value="1"/>
</dbReference>
<dbReference type="SUPFAM" id="SSF50677">
    <property type="entry name" value="ValRS/IleRS/LeuRS editing domain"/>
    <property type="match status" value="1"/>
</dbReference>
<dbReference type="PROSITE" id="PS00178">
    <property type="entry name" value="AA_TRNA_LIGASE_I"/>
    <property type="match status" value="1"/>
</dbReference>
<evidence type="ECO:0000255" key="1">
    <source>
        <dbReference type="HAMAP-Rule" id="MF_02004"/>
    </source>
</evidence>
<organism>
    <name type="scientific">Listeria monocytogenes serovar 1/2a (strain ATCC BAA-679 / EGD-e)</name>
    <dbReference type="NCBI Taxonomy" id="169963"/>
    <lineage>
        <taxon>Bacteria</taxon>
        <taxon>Bacillati</taxon>
        <taxon>Bacillota</taxon>
        <taxon>Bacilli</taxon>
        <taxon>Bacillales</taxon>
        <taxon>Listeriaceae</taxon>
        <taxon>Listeria</taxon>
    </lineage>
</organism>
<comment type="function">
    <text evidence="1">Catalyzes the attachment of valine to tRNA(Val). As ValRS can inadvertently accommodate and process structurally similar amino acids such as threonine, to avoid such errors, it has a 'posttransfer' editing activity that hydrolyzes mischarged Thr-tRNA(Val) in a tRNA-dependent manner.</text>
</comment>
<comment type="catalytic activity">
    <reaction evidence="1">
        <text>tRNA(Val) + L-valine + ATP = L-valyl-tRNA(Val) + AMP + diphosphate</text>
        <dbReference type="Rhea" id="RHEA:10704"/>
        <dbReference type="Rhea" id="RHEA-COMP:9672"/>
        <dbReference type="Rhea" id="RHEA-COMP:9708"/>
        <dbReference type="ChEBI" id="CHEBI:30616"/>
        <dbReference type="ChEBI" id="CHEBI:33019"/>
        <dbReference type="ChEBI" id="CHEBI:57762"/>
        <dbReference type="ChEBI" id="CHEBI:78442"/>
        <dbReference type="ChEBI" id="CHEBI:78537"/>
        <dbReference type="ChEBI" id="CHEBI:456215"/>
        <dbReference type="EC" id="6.1.1.9"/>
    </reaction>
</comment>
<comment type="subunit">
    <text evidence="1">Monomer.</text>
</comment>
<comment type="subcellular location">
    <subcellularLocation>
        <location evidence="1">Cytoplasm</location>
    </subcellularLocation>
</comment>
<comment type="domain">
    <text evidence="1">ValRS has two distinct active sites: one for aminoacylation and one for editing. The misactivated threonine is translocated from the active site to the editing site.</text>
</comment>
<comment type="domain">
    <text evidence="1">The C-terminal coiled-coil domain is crucial for aminoacylation activity.</text>
</comment>
<comment type="similarity">
    <text evidence="1">Belongs to the class-I aminoacyl-tRNA synthetase family. ValS type 1 subfamily.</text>
</comment>
<sequence length="883" mass="102093">MTTEHNEINMPTKYEPSNVEAGKYKWWLEKEFFKAEGNTDKEPYSIVIPPPNVTGKLHLGHAWDTTLQDIITRMKRMQGFDTLYLPGMDHAGIATQAKVEAKLKESNISRYDLGRENFVDKTWEWKEEYAEFIREQWEKLGLGLDYSRERFTLDDGLSDAVKKVFVTLYNKGLIYRGQYIINWDPEAKTALSDIEVIHKDIEGSFYHLKYPLTDGSGYLEVATTRPETIPGDTAVAVHPKDERYQHLIGKTIMLPILNREIPIVADEYVEREFGSGAVKITPAHDPNDFEVGNRHNLPRIIVMHEDGTMNENAGKYDGLDRFVARKEIIQDFKDLGLFIKQEPHLHSVGHSERTGAVVEPYLSLQWFVKMEPLAAEALELQKTENKVNFVPARFEKTYETWMDNIHDWCISRQLWWGHRIPAWYHKETGEIYVGEKEPENLSEWEQDEDVLDTWFSSALWPFSTMGWPDTESPDFQHFFPTNTLVTGYDIIFFWVSRMIFQSVEFTGERPFKDTLIHGLVRDSEGRKMSKSLGNGVDPIEVIDKYGADSLRYTLATGSSPGQDLKFSYEKVESTWNFINKIWNASRFVLMNLDGMKYNEIDLSNVTEVSDKWILTRLNETIQAVTSLGEKYEFGEVGRTLYNFIWDDFCDWYIEIAKIPLYGEDEVAKQTTRSVLAYTLNATMRLLHPFMPFVTEEIWQNLPHEGESITIAEWPKVNEQQIDTKSSTAMATLVEVIRAVRNIRSEVNTPLSKPIVLEIKPKDTTYKEILEQNISYIERFCNPEQVTISFDVEASKTAMTAVVSGAEIFIPLEALIDLNVEIARLEKELEKWNKEVARVQGKLNNERFISKAPESVVAEERLKEKDYLDKKASVLERIETLKEV</sequence>
<gene>
    <name evidence="1" type="primary">valS</name>
    <name type="ordered locus">lmo1552</name>
</gene>
<keyword id="KW-0030">Aminoacyl-tRNA synthetase</keyword>
<keyword id="KW-0067">ATP-binding</keyword>
<keyword id="KW-0175">Coiled coil</keyword>
<keyword id="KW-0963">Cytoplasm</keyword>
<keyword id="KW-0436">Ligase</keyword>
<keyword id="KW-0547">Nucleotide-binding</keyword>
<keyword id="KW-0648">Protein biosynthesis</keyword>
<keyword id="KW-1185">Reference proteome</keyword>
<feature type="chain" id="PRO_0000224500" description="Valine--tRNA ligase">
    <location>
        <begin position="1"/>
        <end position="883"/>
    </location>
</feature>
<feature type="coiled-coil region" evidence="1">
    <location>
        <begin position="811"/>
        <end position="847"/>
    </location>
</feature>
<feature type="short sequence motif" description="'HIGH' region">
    <location>
        <begin position="51"/>
        <end position="61"/>
    </location>
</feature>
<feature type="short sequence motif" description="'KMSKS' region">
    <location>
        <begin position="527"/>
        <end position="531"/>
    </location>
</feature>
<feature type="binding site" evidence="1">
    <location>
        <position position="530"/>
    </location>
    <ligand>
        <name>ATP</name>
        <dbReference type="ChEBI" id="CHEBI:30616"/>
    </ligand>
</feature>